<dbReference type="EC" id="3.6.5.2" evidence="2"/>
<dbReference type="EMBL" id="BC033382">
    <property type="protein sequence ID" value="AAH33382.2"/>
    <property type="molecule type" value="mRNA"/>
</dbReference>
<dbReference type="EMBL" id="BC052480">
    <property type="protein sequence ID" value="AAH52480.1"/>
    <property type="molecule type" value="mRNA"/>
</dbReference>
<dbReference type="EMBL" id="M79314">
    <property type="protein sequence ID" value="AAK14823.1"/>
    <property type="molecule type" value="mRNA"/>
</dbReference>
<dbReference type="CCDS" id="CCDS24196.1"/>
<dbReference type="PIR" id="JH0652">
    <property type="entry name" value="JH0652"/>
</dbReference>
<dbReference type="RefSeq" id="NP_077777.1">
    <property type="nucleotide sequence ID" value="NM_024457.2"/>
</dbReference>
<dbReference type="SMR" id="Q99JI6"/>
<dbReference type="BioGRID" id="229628">
    <property type="interactions" value="12"/>
</dbReference>
<dbReference type="FunCoup" id="Q99JI6">
    <property type="interactions" value="3492"/>
</dbReference>
<dbReference type="IntAct" id="Q99JI6">
    <property type="interactions" value="1"/>
</dbReference>
<dbReference type="STRING" id="10090.ENSMUSP00000066238"/>
<dbReference type="GlyGen" id="Q99JI6">
    <property type="glycosylation" value="1 site, 1 O-linked glycan (1 site)"/>
</dbReference>
<dbReference type="iPTMnet" id="Q99JI6"/>
<dbReference type="PhosphoSitePlus" id="Q99JI6"/>
<dbReference type="SwissPalm" id="Q99JI6"/>
<dbReference type="jPOST" id="Q99JI6"/>
<dbReference type="PaxDb" id="10090-ENSMUSP00000066238"/>
<dbReference type="ProteomicsDB" id="254899"/>
<dbReference type="Pumba" id="Q99JI6"/>
<dbReference type="TopDownProteomics" id="Q99JI6"/>
<dbReference type="Antibodypedia" id="44258">
    <property type="antibodies" value="188 antibodies from 25 providers"/>
</dbReference>
<dbReference type="DNASU" id="215449"/>
<dbReference type="Ensembl" id="ENSMUST00000064667.9">
    <property type="protein sequence ID" value="ENSMUSP00000066238.8"/>
    <property type="gene ID" value="ENSMUSG00000052681.9"/>
</dbReference>
<dbReference type="GeneID" id="215449"/>
<dbReference type="KEGG" id="mmu:215449"/>
<dbReference type="UCSC" id="uc007hdr.1">
    <property type="organism name" value="mouse"/>
</dbReference>
<dbReference type="AGR" id="MGI:894315"/>
<dbReference type="CTD" id="5908"/>
<dbReference type="MGI" id="MGI:894315">
    <property type="gene designation" value="Rap1b"/>
</dbReference>
<dbReference type="VEuPathDB" id="HostDB:ENSMUSG00000052681"/>
<dbReference type="eggNOG" id="KOG0395">
    <property type="taxonomic scope" value="Eukaryota"/>
</dbReference>
<dbReference type="GeneTree" id="ENSGT00940000154429"/>
<dbReference type="HOGENOM" id="CLU_041217_9_8_1"/>
<dbReference type="InParanoid" id="Q99JI6"/>
<dbReference type="OMA" id="MPLREFK"/>
<dbReference type="OrthoDB" id="5976022at2759"/>
<dbReference type="PhylomeDB" id="Q99JI6"/>
<dbReference type="TreeFam" id="TF313014"/>
<dbReference type="BRENDA" id="3.6.5.2">
    <property type="organism ID" value="3474"/>
</dbReference>
<dbReference type="Reactome" id="R-MMU-354192">
    <property type="pathway name" value="Integrin signaling"/>
</dbReference>
<dbReference type="Reactome" id="R-MMU-354194">
    <property type="pathway name" value="GRB2:SOS provides linkage to MAPK signaling for Integrins"/>
</dbReference>
<dbReference type="Reactome" id="R-MMU-372708">
    <property type="pathway name" value="p130Cas linkage to MAPK signaling for integrins"/>
</dbReference>
<dbReference type="Reactome" id="R-MMU-392517">
    <property type="pathway name" value="Rap1 signalling"/>
</dbReference>
<dbReference type="Reactome" id="R-MMU-5674135">
    <property type="pathway name" value="MAP2K and MAPK activation"/>
</dbReference>
<dbReference type="Reactome" id="R-MMU-6798695">
    <property type="pathway name" value="Neutrophil degranulation"/>
</dbReference>
<dbReference type="Reactome" id="R-MMU-8875555">
    <property type="pathway name" value="MET activates RAP1 and RAC1"/>
</dbReference>
<dbReference type="BioGRID-ORCS" id="215449">
    <property type="hits" value="4 hits in 80 CRISPR screens"/>
</dbReference>
<dbReference type="ChiTaRS" id="Rap1b">
    <property type="organism name" value="mouse"/>
</dbReference>
<dbReference type="PRO" id="PR:Q99JI6"/>
<dbReference type="Proteomes" id="UP000000589">
    <property type="component" value="Chromosome 10"/>
</dbReference>
<dbReference type="RNAct" id="Q99JI6">
    <property type="molecule type" value="protein"/>
</dbReference>
<dbReference type="Bgee" id="ENSMUSG00000052681">
    <property type="expression patterns" value="Expressed in peripheral lymph node and 251 other cell types or tissues"/>
</dbReference>
<dbReference type="ExpressionAtlas" id="Q99JI6">
    <property type="expression patterns" value="baseline and differential"/>
</dbReference>
<dbReference type="GO" id="GO:0005911">
    <property type="term" value="C:cell-cell junction"/>
    <property type="evidence" value="ECO:0000250"/>
    <property type="project" value="UniProtKB"/>
</dbReference>
<dbReference type="GO" id="GO:0005829">
    <property type="term" value="C:cytosol"/>
    <property type="evidence" value="ECO:0007669"/>
    <property type="project" value="UniProtKB-SubCell"/>
</dbReference>
<dbReference type="GO" id="GO:0098978">
    <property type="term" value="C:glutamatergic synapse"/>
    <property type="evidence" value="ECO:0000314"/>
    <property type="project" value="SynGO"/>
</dbReference>
<dbReference type="GO" id="GO:0005811">
    <property type="term" value="C:lipid droplet"/>
    <property type="evidence" value="ECO:0007669"/>
    <property type="project" value="Ensembl"/>
</dbReference>
<dbReference type="GO" id="GO:0005886">
    <property type="term" value="C:plasma membrane"/>
    <property type="evidence" value="ECO:0007669"/>
    <property type="project" value="UniProtKB-SubCell"/>
</dbReference>
<dbReference type="GO" id="GO:0003925">
    <property type="term" value="F:G protein activity"/>
    <property type="evidence" value="ECO:0000314"/>
    <property type="project" value="MGI"/>
</dbReference>
<dbReference type="GO" id="GO:0019003">
    <property type="term" value="F:GDP binding"/>
    <property type="evidence" value="ECO:0000250"/>
    <property type="project" value="UniProtKB"/>
</dbReference>
<dbReference type="GO" id="GO:0005525">
    <property type="term" value="F:GTP binding"/>
    <property type="evidence" value="ECO:0000250"/>
    <property type="project" value="UniProtKB"/>
</dbReference>
<dbReference type="GO" id="GO:0003924">
    <property type="term" value="F:GTPase activity"/>
    <property type="evidence" value="ECO:0000250"/>
    <property type="project" value="UniProtKB"/>
</dbReference>
<dbReference type="GO" id="GO:0044877">
    <property type="term" value="F:protein-containing complex binding"/>
    <property type="evidence" value="ECO:0000266"/>
    <property type="project" value="MGI"/>
</dbReference>
<dbReference type="GO" id="GO:0017156">
    <property type="term" value="P:calcium-ion regulated exocytosis"/>
    <property type="evidence" value="ECO:0000316"/>
    <property type="project" value="MGI"/>
</dbReference>
<dbReference type="GO" id="GO:0008283">
    <property type="term" value="P:cell population proliferation"/>
    <property type="evidence" value="ECO:0000353"/>
    <property type="project" value="MGI"/>
</dbReference>
<dbReference type="GO" id="GO:0071320">
    <property type="term" value="P:cellular response to cAMP"/>
    <property type="evidence" value="ECO:0000250"/>
    <property type="project" value="UniProtKB"/>
</dbReference>
<dbReference type="GO" id="GO:0061028">
    <property type="term" value="P:establishment of endothelial barrier"/>
    <property type="evidence" value="ECO:0000250"/>
    <property type="project" value="UniProtKB"/>
</dbReference>
<dbReference type="GO" id="GO:0051649">
    <property type="term" value="P:establishment of localization in cell"/>
    <property type="evidence" value="ECO:0000316"/>
    <property type="project" value="MGI"/>
</dbReference>
<dbReference type="GO" id="GO:0099010">
    <property type="term" value="P:modification of postsynaptic structure"/>
    <property type="evidence" value="ECO:0000314"/>
    <property type="project" value="SynGO"/>
</dbReference>
<dbReference type="GO" id="GO:0045955">
    <property type="term" value="P:negative regulation of calcium ion-dependent exocytosis"/>
    <property type="evidence" value="ECO:0000316"/>
    <property type="project" value="MGI"/>
</dbReference>
<dbReference type="GO" id="GO:2000301">
    <property type="term" value="P:negative regulation of synaptic vesicle exocytosis"/>
    <property type="evidence" value="ECO:0000316"/>
    <property type="project" value="MGI"/>
</dbReference>
<dbReference type="GO" id="GO:0070374">
    <property type="term" value="P:positive regulation of ERK1 and ERK2 cascade"/>
    <property type="evidence" value="ECO:0000316"/>
    <property type="project" value="MGI"/>
</dbReference>
<dbReference type="GO" id="GO:0033625">
    <property type="term" value="P:positive regulation of integrin activation"/>
    <property type="evidence" value="ECO:0007669"/>
    <property type="project" value="Ensembl"/>
</dbReference>
<dbReference type="GO" id="GO:0032486">
    <property type="term" value="P:Rap protein signal transduction"/>
    <property type="evidence" value="ECO:0000250"/>
    <property type="project" value="UniProtKB"/>
</dbReference>
<dbReference type="GO" id="GO:1901888">
    <property type="term" value="P:regulation of cell junction assembly"/>
    <property type="evidence" value="ECO:0000250"/>
    <property type="project" value="UniProtKB"/>
</dbReference>
<dbReference type="GO" id="GO:2000114">
    <property type="term" value="P:regulation of establishment of cell polarity"/>
    <property type="evidence" value="ECO:0000250"/>
    <property type="project" value="UniProtKB"/>
</dbReference>
<dbReference type="GO" id="GO:0007264">
    <property type="term" value="P:small GTPase-mediated signal transduction"/>
    <property type="evidence" value="ECO:0000314"/>
    <property type="project" value="MGI"/>
</dbReference>
<dbReference type="CDD" id="cd04175">
    <property type="entry name" value="Rap1"/>
    <property type="match status" value="1"/>
</dbReference>
<dbReference type="FunFam" id="3.40.50.300:FF:000182">
    <property type="entry name" value="ras-related protein Rap-1b"/>
    <property type="match status" value="1"/>
</dbReference>
<dbReference type="Gene3D" id="3.40.50.300">
    <property type="entry name" value="P-loop containing nucleotide triphosphate hydrolases"/>
    <property type="match status" value="1"/>
</dbReference>
<dbReference type="InterPro" id="IPR027417">
    <property type="entry name" value="P-loop_NTPase"/>
</dbReference>
<dbReference type="InterPro" id="IPR038851">
    <property type="entry name" value="Rap1"/>
</dbReference>
<dbReference type="InterPro" id="IPR005225">
    <property type="entry name" value="Small_GTP-bd"/>
</dbReference>
<dbReference type="InterPro" id="IPR001806">
    <property type="entry name" value="Small_GTPase"/>
</dbReference>
<dbReference type="InterPro" id="IPR020849">
    <property type="entry name" value="Small_GTPase_Ras-type"/>
</dbReference>
<dbReference type="NCBIfam" id="TIGR00231">
    <property type="entry name" value="small_GTP"/>
    <property type="match status" value="1"/>
</dbReference>
<dbReference type="PANTHER" id="PTHR24070">
    <property type="entry name" value="RAS, DI-RAS, AND RHEB FAMILY MEMBERS OF SMALL GTPASE SUPERFAMILY"/>
    <property type="match status" value="1"/>
</dbReference>
<dbReference type="Pfam" id="PF00071">
    <property type="entry name" value="Ras"/>
    <property type="match status" value="1"/>
</dbReference>
<dbReference type="PRINTS" id="PR00449">
    <property type="entry name" value="RASTRNSFRMNG"/>
</dbReference>
<dbReference type="SMART" id="SM00175">
    <property type="entry name" value="RAB"/>
    <property type="match status" value="1"/>
</dbReference>
<dbReference type="SMART" id="SM00176">
    <property type="entry name" value="RAN"/>
    <property type="match status" value="1"/>
</dbReference>
<dbReference type="SMART" id="SM00173">
    <property type="entry name" value="RAS"/>
    <property type="match status" value="1"/>
</dbReference>
<dbReference type="SMART" id="SM00174">
    <property type="entry name" value="RHO"/>
    <property type="match status" value="1"/>
</dbReference>
<dbReference type="SUPFAM" id="SSF52540">
    <property type="entry name" value="P-loop containing nucleoside triphosphate hydrolases"/>
    <property type="match status" value="1"/>
</dbReference>
<dbReference type="PROSITE" id="PS51421">
    <property type="entry name" value="RAS"/>
    <property type="match status" value="1"/>
</dbReference>
<protein>
    <recommendedName>
        <fullName>Ras-related protein Rap-1b</fullName>
        <ecNumber evidence="2">3.6.5.2</ecNumber>
    </recommendedName>
    <alternativeName>
        <fullName>GTP-binding protein smg p21B</fullName>
    </alternativeName>
</protein>
<proteinExistence type="evidence at protein level"/>
<sequence>MREYKLVVLGSGGVGKSALTVQFVQGIFVEKYDPTIEDSYRKQVEVDAQQCMLEILDTAGTEQFTAMRDLYMKNGQGFALVYSITAQSTFNDLQDLREQILRVKDTDDVPMILVGNKCDLEDERVVGKEQGQNLARQWNNCAFLESSAKSKINVNEIFYDLVRQINRKTPVPGKARKKSSCQLL</sequence>
<name>RAP1B_MOUSE</name>
<reference key="1">
    <citation type="journal article" date="2004" name="Genome Res.">
        <title>The status, quality, and expansion of the NIH full-length cDNA project: the Mammalian Gene Collection (MGC).</title>
        <authorList>
            <consortium name="The MGC Project Team"/>
        </authorList>
    </citation>
    <scope>NUCLEOTIDE SEQUENCE [LARGE SCALE MRNA]</scope>
    <source>
        <strain>C57BL/6J</strain>
        <tissue>Mammary tumor</tissue>
    </source>
</reference>
<reference key="2">
    <citation type="journal article" date="1992" name="Gene">
        <title>The complexity of the Rab and Rho GTP-binding protein subfamilies revealed by a PCR cloning approach.</title>
        <authorList>
            <person name="Chavrier P."/>
            <person name="Simons K."/>
            <person name="Zerial M."/>
        </authorList>
    </citation>
    <scope>NUCLEOTIDE SEQUENCE [MRNA] OF 15-62</scope>
    <source>
        <tissue>Kidney</tissue>
    </source>
</reference>
<reference key="3">
    <citation type="journal article" date="2010" name="Cell">
        <title>A tissue-specific atlas of mouse protein phosphorylation and expression.</title>
        <authorList>
            <person name="Huttlin E.L."/>
            <person name="Jedrychowski M.P."/>
            <person name="Elias J.E."/>
            <person name="Goswami T."/>
            <person name="Rad R."/>
            <person name="Beausoleil S.A."/>
            <person name="Villen J."/>
            <person name="Haas W."/>
            <person name="Sowa M.E."/>
            <person name="Gygi S.P."/>
        </authorList>
    </citation>
    <scope>IDENTIFICATION BY MASS SPECTROMETRY [LARGE SCALE ANALYSIS]</scope>
    <source>
        <tissue>Brain</tissue>
        <tissue>Brown adipose tissue</tissue>
        <tissue>Heart</tissue>
        <tissue>Kidney</tissue>
        <tissue>Liver</tissue>
        <tissue>Lung</tissue>
        <tissue>Pancreas</tissue>
        <tissue>Spleen</tissue>
        <tissue>Testis</tissue>
    </source>
</reference>
<accession>Q99JI6</accession>
<feature type="chain" id="PRO_0000030211" description="Ras-related protein Rap-1b">
    <location>
        <begin position="1"/>
        <end position="181"/>
    </location>
</feature>
<feature type="propeptide" id="PRO_0000030212" description="Removed in mature form" evidence="1">
    <location>
        <begin position="182"/>
        <end position="184"/>
    </location>
</feature>
<feature type="region of interest" description="Interaction with KRIT1" evidence="2">
    <location>
        <begin position="25"/>
        <end position="67"/>
    </location>
</feature>
<feature type="short sequence motif" description="Effector region" evidence="3">
    <location>
        <begin position="32"/>
        <end position="40"/>
    </location>
</feature>
<feature type="binding site" evidence="2">
    <location>
        <begin position="10"/>
        <end position="18"/>
    </location>
    <ligand>
        <name>GTP</name>
        <dbReference type="ChEBI" id="CHEBI:37565"/>
    </ligand>
</feature>
<feature type="binding site" evidence="2">
    <location>
        <begin position="57"/>
        <end position="61"/>
    </location>
    <ligand>
        <name>GTP</name>
        <dbReference type="ChEBI" id="CHEBI:37565"/>
    </ligand>
</feature>
<feature type="binding site" evidence="2">
    <location>
        <begin position="116"/>
        <end position="119"/>
    </location>
    <ligand>
        <name>GTP</name>
        <dbReference type="ChEBI" id="CHEBI:37565"/>
    </ligand>
</feature>
<feature type="binding site" evidence="2">
    <location>
        <begin position="147"/>
        <end position="149"/>
    </location>
    <ligand>
        <name>GTP</name>
        <dbReference type="ChEBI" id="CHEBI:37565"/>
    </ligand>
</feature>
<feature type="modified residue" description="ADP-ribosylserine; by botulinum toxin" evidence="1">
    <location>
        <position position="39"/>
    </location>
</feature>
<feature type="modified residue" description="Phosphoserine; by PKA" evidence="2">
    <location>
        <position position="179"/>
    </location>
</feature>
<feature type="modified residue" description="Cysteine methyl ester" evidence="2">
    <location>
        <position position="181"/>
    </location>
</feature>
<feature type="lipid moiety-binding region" description="S-geranylgeranyl cysteine" evidence="2">
    <location>
        <position position="181"/>
    </location>
</feature>
<feature type="sequence conflict" description="In Ref. 2; AAK14823." evidence="3" ref="2">
    <original>L</original>
    <variation>W</variation>
    <location>
        <position position="56"/>
    </location>
</feature>
<feature type="sequence conflict" description="In Ref. 2; AAK14823." evidence="3" ref="2">
    <original>T</original>
    <variation>Q</variation>
    <location>
        <position position="61"/>
    </location>
</feature>
<evidence type="ECO:0000250" key="1"/>
<evidence type="ECO:0000250" key="2">
    <source>
        <dbReference type="UniProtKB" id="P61224"/>
    </source>
</evidence>
<evidence type="ECO:0000305" key="3"/>
<keyword id="KW-0013">ADP-ribosylation</keyword>
<keyword id="KW-0965">Cell junction</keyword>
<keyword id="KW-1003">Cell membrane</keyword>
<keyword id="KW-0963">Cytoplasm</keyword>
<keyword id="KW-0342">GTP-binding</keyword>
<keyword id="KW-0378">Hydrolase</keyword>
<keyword id="KW-0449">Lipoprotein</keyword>
<keyword id="KW-0472">Membrane</keyword>
<keyword id="KW-0488">Methylation</keyword>
<keyword id="KW-0547">Nucleotide-binding</keyword>
<keyword id="KW-0597">Phosphoprotein</keyword>
<keyword id="KW-0636">Prenylation</keyword>
<keyword id="KW-1185">Reference proteome</keyword>
<gene>
    <name type="primary">Rap1b</name>
</gene>
<organism>
    <name type="scientific">Mus musculus</name>
    <name type="common">Mouse</name>
    <dbReference type="NCBI Taxonomy" id="10090"/>
    <lineage>
        <taxon>Eukaryota</taxon>
        <taxon>Metazoa</taxon>
        <taxon>Chordata</taxon>
        <taxon>Craniata</taxon>
        <taxon>Vertebrata</taxon>
        <taxon>Euteleostomi</taxon>
        <taxon>Mammalia</taxon>
        <taxon>Eutheria</taxon>
        <taxon>Euarchontoglires</taxon>
        <taxon>Glires</taxon>
        <taxon>Rodentia</taxon>
        <taxon>Myomorpha</taxon>
        <taxon>Muroidea</taxon>
        <taxon>Muridae</taxon>
        <taxon>Murinae</taxon>
        <taxon>Mus</taxon>
        <taxon>Mus</taxon>
    </lineage>
</organism>
<comment type="function">
    <text evidence="2">GTP-binding protein that possesses intrinsic GTPase activity. Contributes to the polarizing activity of KRIT1 and CDH5 in the establishment and maintenance of correct endothelial cell polarity and vascular lumen. Required for the localization of phosphorylated PRKCZ, PARD3 and TIAM1 to the cell junction. Plays a role in the establishment of basal endothelial barrier function (By similarity).</text>
</comment>
<comment type="catalytic activity">
    <reaction evidence="2">
        <text>GTP + H2O = GDP + phosphate + H(+)</text>
        <dbReference type="Rhea" id="RHEA:19669"/>
        <dbReference type="ChEBI" id="CHEBI:15377"/>
        <dbReference type="ChEBI" id="CHEBI:15378"/>
        <dbReference type="ChEBI" id="CHEBI:37565"/>
        <dbReference type="ChEBI" id="CHEBI:43474"/>
        <dbReference type="ChEBI" id="CHEBI:58189"/>
        <dbReference type="EC" id="3.6.5.2"/>
    </reaction>
</comment>
<comment type="activity regulation">
    <text evidence="2">Activated by guanine nucleotide-exchange factor (GEF) EPAC2 in a cAMP-dependent manner.</text>
</comment>
<comment type="subunit">
    <text evidence="2">Heterodimer with RAP1GAP (By similarity). Interacts with EPAC2 (By similarity). Interacts with SGSM1 (By similarity). Interacts with SGSM2 (By similarity). Interacts with SGSM3 (By similarity). Interacts with KRIT1 (By similarity). Interacts with RAP1GDS1 (By similarity).</text>
</comment>
<comment type="subcellular location">
    <subcellularLocation>
        <location evidence="2">Cell membrane</location>
    </subcellularLocation>
    <subcellularLocation>
        <location evidence="2">Cytoplasm</location>
        <location evidence="2">Cytosol</location>
    </subcellularLocation>
    <subcellularLocation>
        <location evidence="2">Cell junction</location>
    </subcellularLocation>
    <text evidence="2">May shuttle between plasma membrane and cytosol (By similarity). Presence of KRIT1 and CDH5 is required for its localization to the cell junction (By similarity).</text>
</comment>
<comment type="similarity">
    <text evidence="3">Belongs to the small GTPase superfamily. Ras family.</text>
</comment>